<proteinExistence type="inferred from homology"/>
<organism>
    <name type="scientific">Listeria monocytogenes serotype 4b (strain CLIP80459)</name>
    <dbReference type="NCBI Taxonomy" id="568819"/>
    <lineage>
        <taxon>Bacteria</taxon>
        <taxon>Bacillati</taxon>
        <taxon>Bacillota</taxon>
        <taxon>Bacilli</taxon>
        <taxon>Bacillales</taxon>
        <taxon>Listeriaceae</taxon>
        <taxon>Listeria</taxon>
    </lineage>
</organism>
<reference key="1">
    <citation type="journal article" date="2012" name="BMC Genomics">
        <title>Comparative genomics and transcriptomics of lineages I, II, and III strains of Listeria monocytogenes.</title>
        <authorList>
            <person name="Hain T."/>
            <person name="Ghai R."/>
            <person name="Billion A."/>
            <person name="Kuenne C.T."/>
            <person name="Steinweg C."/>
            <person name="Izar B."/>
            <person name="Mohamed W."/>
            <person name="Mraheil M."/>
            <person name="Domann E."/>
            <person name="Schaffrath S."/>
            <person name="Karst U."/>
            <person name="Goesmann A."/>
            <person name="Oehm S."/>
            <person name="Puhler A."/>
            <person name="Merkl R."/>
            <person name="Vorwerk S."/>
            <person name="Glaser P."/>
            <person name="Garrido P."/>
            <person name="Rusniok C."/>
            <person name="Buchrieser C."/>
            <person name="Goebel W."/>
            <person name="Chakraborty T."/>
        </authorList>
    </citation>
    <scope>NUCLEOTIDE SEQUENCE [LARGE SCALE GENOMIC DNA]</scope>
    <source>
        <strain>CLIP80459</strain>
    </source>
</reference>
<gene>
    <name evidence="1" type="primary">argG</name>
    <name type="ordered locus">Lm4b_02111</name>
</gene>
<keyword id="KW-0028">Amino-acid biosynthesis</keyword>
<keyword id="KW-0055">Arginine biosynthesis</keyword>
<keyword id="KW-0067">ATP-binding</keyword>
<keyword id="KW-0963">Cytoplasm</keyword>
<keyword id="KW-0436">Ligase</keyword>
<keyword id="KW-0547">Nucleotide-binding</keyword>
<protein>
    <recommendedName>
        <fullName evidence="1">Argininosuccinate synthase</fullName>
        <ecNumber evidence="1">6.3.4.5</ecNumber>
    </recommendedName>
    <alternativeName>
        <fullName evidence="1">Citrulline--aspartate ligase</fullName>
    </alternativeName>
</protein>
<evidence type="ECO:0000255" key="1">
    <source>
        <dbReference type="HAMAP-Rule" id="MF_00005"/>
    </source>
</evidence>
<comment type="catalytic activity">
    <reaction evidence="1">
        <text>L-citrulline + L-aspartate + ATP = 2-(N(omega)-L-arginino)succinate + AMP + diphosphate + H(+)</text>
        <dbReference type="Rhea" id="RHEA:10932"/>
        <dbReference type="ChEBI" id="CHEBI:15378"/>
        <dbReference type="ChEBI" id="CHEBI:29991"/>
        <dbReference type="ChEBI" id="CHEBI:30616"/>
        <dbReference type="ChEBI" id="CHEBI:33019"/>
        <dbReference type="ChEBI" id="CHEBI:57472"/>
        <dbReference type="ChEBI" id="CHEBI:57743"/>
        <dbReference type="ChEBI" id="CHEBI:456215"/>
        <dbReference type="EC" id="6.3.4.5"/>
    </reaction>
</comment>
<comment type="pathway">
    <text evidence="1">Amino-acid biosynthesis; L-arginine biosynthesis; L-arginine from L-ornithine and carbamoyl phosphate: step 2/3.</text>
</comment>
<comment type="subunit">
    <text evidence="1">Homotetramer.</text>
</comment>
<comment type="subcellular location">
    <subcellularLocation>
        <location evidence="1">Cytoplasm</location>
    </subcellularLocation>
</comment>
<comment type="similarity">
    <text evidence="1">Belongs to the argininosuccinate synthase family. Type 1 subfamily.</text>
</comment>
<sequence length="404" mass="44478">MAKEKIVLAYSGGLDTSVAIQWLVESGYEVIACCLDVGEGKNLDFIKEKAITVGASESYTIDAKEEFAEDFALIALQAHAYYEGKYPLISALSRPLIAKKLVEVARQEGASAIAHGCTGKGNDQVRFEVAIHALAPDLKVVSPVRDWKWSREEEINYAKEHNIPVPIDLDNPFSIDQNLWGRSNECGVLENPWTTPPEAAYDLTVSLEDAPDTPDIVEITFDAGIPISLNGENMSLANLILTLNEIAGKHGVGRIDHIENRLVGIKSREVYECPAAVTLITAHKELEDLTFVREVAHFKPIIEQKISETIYNGLWFSPLTEALVAFLKSTQKFVNGTIRVKLFKGHAIVEGRKSPNSLYDENLATYTSSDTFDQDAAVGFIKLWGLPTKVSAEVNSKVTITTEV</sequence>
<name>ASSY_LISMC</name>
<dbReference type="EC" id="6.3.4.5" evidence="1"/>
<dbReference type="EMBL" id="FM242711">
    <property type="protein sequence ID" value="CAS05871.1"/>
    <property type="molecule type" value="Genomic_DNA"/>
</dbReference>
<dbReference type="RefSeq" id="WP_003724518.1">
    <property type="nucleotide sequence ID" value="NC_012488.1"/>
</dbReference>
<dbReference type="SMR" id="C1KX43"/>
<dbReference type="KEGG" id="lmc:Lm4b_02111"/>
<dbReference type="HOGENOM" id="CLU_032784_4_2_9"/>
<dbReference type="UniPathway" id="UPA00068">
    <property type="reaction ID" value="UER00113"/>
</dbReference>
<dbReference type="GO" id="GO:0005737">
    <property type="term" value="C:cytoplasm"/>
    <property type="evidence" value="ECO:0007669"/>
    <property type="project" value="UniProtKB-SubCell"/>
</dbReference>
<dbReference type="GO" id="GO:0004055">
    <property type="term" value="F:argininosuccinate synthase activity"/>
    <property type="evidence" value="ECO:0007669"/>
    <property type="project" value="UniProtKB-UniRule"/>
</dbReference>
<dbReference type="GO" id="GO:0005524">
    <property type="term" value="F:ATP binding"/>
    <property type="evidence" value="ECO:0007669"/>
    <property type="project" value="UniProtKB-UniRule"/>
</dbReference>
<dbReference type="GO" id="GO:0000053">
    <property type="term" value="P:argininosuccinate metabolic process"/>
    <property type="evidence" value="ECO:0007669"/>
    <property type="project" value="TreeGrafter"/>
</dbReference>
<dbReference type="GO" id="GO:0006526">
    <property type="term" value="P:L-arginine biosynthetic process"/>
    <property type="evidence" value="ECO:0007669"/>
    <property type="project" value="UniProtKB-UniRule"/>
</dbReference>
<dbReference type="GO" id="GO:0000050">
    <property type="term" value="P:urea cycle"/>
    <property type="evidence" value="ECO:0007669"/>
    <property type="project" value="TreeGrafter"/>
</dbReference>
<dbReference type="CDD" id="cd01999">
    <property type="entry name" value="ASS"/>
    <property type="match status" value="1"/>
</dbReference>
<dbReference type="FunFam" id="1.20.5.470:FF:000002">
    <property type="entry name" value="Argininosuccinate synthase"/>
    <property type="match status" value="1"/>
</dbReference>
<dbReference type="FunFam" id="3.40.50.620:FF:000038">
    <property type="entry name" value="Argininosuccinate synthase"/>
    <property type="match status" value="1"/>
</dbReference>
<dbReference type="FunFam" id="3.90.1260.10:FF:000007">
    <property type="entry name" value="Argininosuccinate synthase"/>
    <property type="match status" value="1"/>
</dbReference>
<dbReference type="Gene3D" id="3.90.1260.10">
    <property type="entry name" value="Argininosuccinate synthetase, chain A, domain 2"/>
    <property type="match status" value="1"/>
</dbReference>
<dbReference type="Gene3D" id="3.40.50.620">
    <property type="entry name" value="HUPs"/>
    <property type="match status" value="1"/>
</dbReference>
<dbReference type="Gene3D" id="1.20.5.470">
    <property type="entry name" value="Single helix bin"/>
    <property type="match status" value="1"/>
</dbReference>
<dbReference type="HAMAP" id="MF_00005">
    <property type="entry name" value="Arg_succ_synth_type1"/>
    <property type="match status" value="1"/>
</dbReference>
<dbReference type="InterPro" id="IPR048268">
    <property type="entry name" value="Arginosuc_syn_C"/>
</dbReference>
<dbReference type="InterPro" id="IPR048267">
    <property type="entry name" value="Arginosuc_syn_N"/>
</dbReference>
<dbReference type="InterPro" id="IPR001518">
    <property type="entry name" value="Arginosuc_synth"/>
</dbReference>
<dbReference type="InterPro" id="IPR018223">
    <property type="entry name" value="Arginosuc_synth_CS"/>
</dbReference>
<dbReference type="InterPro" id="IPR023434">
    <property type="entry name" value="Arginosuc_synth_type_1_subfam"/>
</dbReference>
<dbReference type="InterPro" id="IPR024074">
    <property type="entry name" value="AS_cat/multimer_dom_body"/>
</dbReference>
<dbReference type="InterPro" id="IPR014729">
    <property type="entry name" value="Rossmann-like_a/b/a_fold"/>
</dbReference>
<dbReference type="NCBIfam" id="TIGR00032">
    <property type="entry name" value="argG"/>
    <property type="match status" value="1"/>
</dbReference>
<dbReference type="NCBIfam" id="NF001770">
    <property type="entry name" value="PRK00509.1"/>
    <property type="match status" value="1"/>
</dbReference>
<dbReference type="PANTHER" id="PTHR11587">
    <property type="entry name" value="ARGININOSUCCINATE SYNTHASE"/>
    <property type="match status" value="1"/>
</dbReference>
<dbReference type="PANTHER" id="PTHR11587:SF2">
    <property type="entry name" value="ARGININOSUCCINATE SYNTHASE"/>
    <property type="match status" value="1"/>
</dbReference>
<dbReference type="Pfam" id="PF20979">
    <property type="entry name" value="Arginosuc_syn_C"/>
    <property type="match status" value="1"/>
</dbReference>
<dbReference type="Pfam" id="PF00764">
    <property type="entry name" value="Arginosuc_synth"/>
    <property type="match status" value="1"/>
</dbReference>
<dbReference type="SUPFAM" id="SSF52402">
    <property type="entry name" value="Adenine nucleotide alpha hydrolases-like"/>
    <property type="match status" value="1"/>
</dbReference>
<dbReference type="SUPFAM" id="SSF69864">
    <property type="entry name" value="Argininosuccinate synthetase, C-terminal domain"/>
    <property type="match status" value="1"/>
</dbReference>
<dbReference type="PROSITE" id="PS00564">
    <property type="entry name" value="ARGININOSUCCIN_SYN_1"/>
    <property type="match status" value="1"/>
</dbReference>
<dbReference type="PROSITE" id="PS00565">
    <property type="entry name" value="ARGININOSUCCIN_SYN_2"/>
    <property type="match status" value="1"/>
</dbReference>
<feature type="chain" id="PRO_1000201685" description="Argininosuccinate synthase">
    <location>
        <begin position="1"/>
        <end position="404"/>
    </location>
</feature>
<feature type="binding site" evidence="1">
    <location>
        <begin position="9"/>
        <end position="17"/>
    </location>
    <ligand>
        <name>ATP</name>
        <dbReference type="ChEBI" id="CHEBI:30616"/>
    </ligand>
</feature>
<feature type="binding site" evidence="1">
    <location>
        <position position="86"/>
    </location>
    <ligand>
        <name>L-citrulline</name>
        <dbReference type="ChEBI" id="CHEBI:57743"/>
    </ligand>
</feature>
<feature type="binding site" evidence="1">
    <location>
        <position position="116"/>
    </location>
    <ligand>
        <name>ATP</name>
        <dbReference type="ChEBI" id="CHEBI:30616"/>
    </ligand>
</feature>
<feature type="binding site" evidence="1">
    <location>
        <position position="118"/>
    </location>
    <ligand>
        <name>L-aspartate</name>
        <dbReference type="ChEBI" id="CHEBI:29991"/>
    </ligand>
</feature>
<feature type="binding site" evidence="1">
    <location>
        <position position="122"/>
    </location>
    <ligand>
        <name>L-aspartate</name>
        <dbReference type="ChEBI" id="CHEBI:29991"/>
    </ligand>
</feature>
<feature type="binding site" evidence="1">
    <location>
        <position position="122"/>
    </location>
    <ligand>
        <name>L-citrulline</name>
        <dbReference type="ChEBI" id="CHEBI:57743"/>
    </ligand>
</feature>
<feature type="binding site" evidence="1">
    <location>
        <position position="123"/>
    </location>
    <ligand>
        <name>L-aspartate</name>
        <dbReference type="ChEBI" id="CHEBI:29991"/>
    </ligand>
</feature>
<feature type="binding site" evidence="1">
    <location>
        <position position="126"/>
    </location>
    <ligand>
        <name>L-citrulline</name>
        <dbReference type="ChEBI" id="CHEBI:57743"/>
    </ligand>
</feature>
<feature type="binding site" evidence="1">
    <location>
        <position position="174"/>
    </location>
    <ligand>
        <name>L-citrulline</name>
        <dbReference type="ChEBI" id="CHEBI:57743"/>
    </ligand>
</feature>
<feature type="binding site" evidence="1">
    <location>
        <position position="183"/>
    </location>
    <ligand>
        <name>L-citrulline</name>
        <dbReference type="ChEBI" id="CHEBI:57743"/>
    </ligand>
</feature>
<feature type="binding site" evidence="1">
    <location>
        <position position="259"/>
    </location>
    <ligand>
        <name>L-citrulline</name>
        <dbReference type="ChEBI" id="CHEBI:57743"/>
    </ligand>
</feature>
<feature type="binding site" evidence="1">
    <location>
        <position position="271"/>
    </location>
    <ligand>
        <name>L-citrulline</name>
        <dbReference type="ChEBI" id="CHEBI:57743"/>
    </ligand>
</feature>
<accession>C1KX43</accession>